<gene>
    <name evidence="1" type="primary">glmU</name>
    <name type="ordered locus">ECA4509</name>
</gene>
<keyword id="KW-0012">Acyltransferase</keyword>
<keyword id="KW-0133">Cell shape</keyword>
<keyword id="KW-0961">Cell wall biogenesis/degradation</keyword>
<keyword id="KW-0963">Cytoplasm</keyword>
<keyword id="KW-0460">Magnesium</keyword>
<keyword id="KW-0479">Metal-binding</keyword>
<keyword id="KW-0511">Multifunctional enzyme</keyword>
<keyword id="KW-0548">Nucleotidyltransferase</keyword>
<keyword id="KW-0573">Peptidoglycan synthesis</keyword>
<keyword id="KW-1185">Reference proteome</keyword>
<keyword id="KW-0677">Repeat</keyword>
<keyword id="KW-0808">Transferase</keyword>
<accession>Q6CYJ8</accession>
<name>GLMU_PECAS</name>
<organism>
    <name type="scientific">Pectobacterium atrosepticum (strain SCRI 1043 / ATCC BAA-672)</name>
    <name type="common">Erwinia carotovora subsp. atroseptica</name>
    <dbReference type="NCBI Taxonomy" id="218491"/>
    <lineage>
        <taxon>Bacteria</taxon>
        <taxon>Pseudomonadati</taxon>
        <taxon>Pseudomonadota</taxon>
        <taxon>Gammaproteobacteria</taxon>
        <taxon>Enterobacterales</taxon>
        <taxon>Pectobacteriaceae</taxon>
        <taxon>Pectobacterium</taxon>
    </lineage>
</organism>
<reference key="1">
    <citation type="journal article" date="2004" name="Proc. Natl. Acad. Sci. U.S.A.">
        <title>Genome sequence of the enterobacterial phytopathogen Erwinia carotovora subsp. atroseptica and characterization of virulence factors.</title>
        <authorList>
            <person name="Bell K.S."/>
            <person name="Sebaihia M."/>
            <person name="Pritchard L."/>
            <person name="Holden M.T.G."/>
            <person name="Hyman L.J."/>
            <person name="Holeva M.C."/>
            <person name="Thomson N.R."/>
            <person name="Bentley S.D."/>
            <person name="Churcher L.J.C."/>
            <person name="Mungall K."/>
            <person name="Atkin R."/>
            <person name="Bason N."/>
            <person name="Brooks K."/>
            <person name="Chillingworth T."/>
            <person name="Clark K."/>
            <person name="Doggett J."/>
            <person name="Fraser A."/>
            <person name="Hance Z."/>
            <person name="Hauser H."/>
            <person name="Jagels K."/>
            <person name="Moule S."/>
            <person name="Norbertczak H."/>
            <person name="Ormond D."/>
            <person name="Price C."/>
            <person name="Quail M.A."/>
            <person name="Sanders M."/>
            <person name="Walker D."/>
            <person name="Whitehead S."/>
            <person name="Salmond G.P.C."/>
            <person name="Birch P.R.J."/>
            <person name="Parkhill J."/>
            <person name="Toth I.K."/>
        </authorList>
    </citation>
    <scope>NUCLEOTIDE SEQUENCE [LARGE SCALE GENOMIC DNA]</scope>
    <source>
        <strain>SCRI 1043 / ATCC BAA-672</strain>
    </source>
</reference>
<comment type="function">
    <text evidence="1">Catalyzes the last two sequential reactions in the de novo biosynthetic pathway for UDP-N-acetylglucosamine (UDP-GlcNAc). The C-terminal domain catalyzes the transfer of acetyl group from acetyl coenzyme A to glucosamine-1-phosphate (GlcN-1-P) to produce N-acetylglucosamine-1-phosphate (GlcNAc-1-P), which is converted into UDP-GlcNAc by the transfer of uridine 5-monophosphate (from uridine 5-triphosphate), a reaction catalyzed by the N-terminal domain.</text>
</comment>
<comment type="catalytic activity">
    <reaction evidence="1">
        <text>alpha-D-glucosamine 1-phosphate + acetyl-CoA = N-acetyl-alpha-D-glucosamine 1-phosphate + CoA + H(+)</text>
        <dbReference type="Rhea" id="RHEA:13725"/>
        <dbReference type="ChEBI" id="CHEBI:15378"/>
        <dbReference type="ChEBI" id="CHEBI:57287"/>
        <dbReference type="ChEBI" id="CHEBI:57288"/>
        <dbReference type="ChEBI" id="CHEBI:57776"/>
        <dbReference type="ChEBI" id="CHEBI:58516"/>
        <dbReference type="EC" id="2.3.1.157"/>
    </reaction>
</comment>
<comment type="catalytic activity">
    <reaction evidence="1">
        <text>N-acetyl-alpha-D-glucosamine 1-phosphate + UTP + H(+) = UDP-N-acetyl-alpha-D-glucosamine + diphosphate</text>
        <dbReference type="Rhea" id="RHEA:13509"/>
        <dbReference type="ChEBI" id="CHEBI:15378"/>
        <dbReference type="ChEBI" id="CHEBI:33019"/>
        <dbReference type="ChEBI" id="CHEBI:46398"/>
        <dbReference type="ChEBI" id="CHEBI:57705"/>
        <dbReference type="ChEBI" id="CHEBI:57776"/>
        <dbReference type="EC" id="2.7.7.23"/>
    </reaction>
</comment>
<comment type="cofactor">
    <cofactor evidence="1">
        <name>Mg(2+)</name>
        <dbReference type="ChEBI" id="CHEBI:18420"/>
    </cofactor>
    <text evidence="1">Binds 1 Mg(2+) ion per subunit.</text>
</comment>
<comment type="pathway">
    <text evidence="1">Nucleotide-sugar biosynthesis; UDP-N-acetyl-alpha-D-glucosamine biosynthesis; N-acetyl-alpha-D-glucosamine 1-phosphate from alpha-D-glucosamine 6-phosphate (route II): step 2/2.</text>
</comment>
<comment type="pathway">
    <text evidence="1">Nucleotide-sugar biosynthesis; UDP-N-acetyl-alpha-D-glucosamine biosynthesis; UDP-N-acetyl-alpha-D-glucosamine from N-acetyl-alpha-D-glucosamine 1-phosphate: step 1/1.</text>
</comment>
<comment type="pathway">
    <text evidence="1">Bacterial outer membrane biogenesis; LPS lipid A biosynthesis.</text>
</comment>
<comment type="subunit">
    <text evidence="1">Homotrimer.</text>
</comment>
<comment type="subcellular location">
    <subcellularLocation>
        <location evidence="1">Cytoplasm</location>
    </subcellularLocation>
</comment>
<comment type="similarity">
    <text evidence="1">In the N-terminal section; belongs to the N-acetylglucosamine-1-phosphate uridyltransferase family.</text>
</comment>
<comment type="similarity">
    <text evidence="1">In the C-terminal section; belongs to the transferase hexapeptide repeat family.</text>
</comment>
<protein>
    <recommendedName>
        <fullName evidence="1">Bifunctional protein GlmU</fullName>
    </recommendedName>
    <domain>
        <recommendedName>
            <fullName evidence="1">UDP-N-acetylglucosamine pyrophosphorylase</fullName>
            <ecNumber evidence="1">2.7.7.23</ecNumber>
        </recommendedName>
        <alternativeName>
            <fullName evidence="1">N-acetylglucosamine-1-phosphate uridyltransferase</fullName>
        </alternativeName>
    </domain>
    <domain>
        <recommendedName>
            <fullName evidence="1">Glucosamine-1-phosphate N-acetyltransferase</fullName>
            <ecNumber evidence="1">2.3.1.157</ecNumber>
        </recommendedName>
    </domain>
</protein>
<feature type="chain" id="PRO_0000233771" description="Bifunctional protein GlmU">
    <location>
        <begin position="1"/>
        <end position="456"/>
    </location>
</feature>
<feature type="region of interest" description="Pyrophosphorylase" evidence="1">
    <location>
        <begin position="1"/>
        <end position="229"/>
    </location>
</feature>
<feature type="region of interest" description="Linker" evidence="1">
    <location>
        <begin position="230"/>
        <end position="250"/>
    </location>
</feature>
<feature type="region of interest" description="N-acetyltransferase" evidence="1">
    <location>
        <begin position="251"/>
        <end position="456"/>
    </location>
</feature>
<feature type="active site" description="Proton acceptor" evidence="1">
    <location>
        <position position="363"/>
    </location>
</feature>
<feature type="binding site" evidence="1">
    <location>
        <begin position="11"/>
        <end position="14"/>
    </location>
    <ligand>
        <name>UDP-N-acetyl-alpha-D-glucosamine</name>
        <dbReference type="ChEBI" id="CHEBI:57705"/>
    </ligand>
</feature>
<feature type="binding site" evidence="1">
    <location>
        <position position="25"/>
    </location>
    <ligand>
        <name>UDP-N-acetyl-alpha-D-glucosamine</name>
        <dbReference type="ChEBI" id="CHEBI:57705"/>
    </ligand>
</feature>
<feature type="binding site" evidence="1">
    <location>
        <position position="76"/>
    </location>
    <ligand>
        <name>UDP-N-acetyl-alpha-D-glucosamine</name>
        <dbReference type="ChEBI" id="CHEBI:57705"/>
    </ligand>
</feature>
<feature type="binding site" evidence="1">
    <location>
        <begin position="81"/>
        <end position="82"/>
    </location>
    <ligand>
        <name>UDP-N-acetyl-alpha-D-glucosamine</name>
        <dbReference type="ChEBI" id="CHEBI:57705"/>
    </ligand>
</feature>
<feature type="binding site" evidence="1">
    <location>
        <begin position="103"/>
        <end position="105"/>
    </location>
    <ligand>
        <name>UDP-N-acetyl-alpha-D-glucosamine</name>
        <dbReference type="ChEBI" id="CHEBI:57705"/>
    </ligand>
</feature>
<feature type="binding site" evidence="1">
    <location>
        <position position="105"/>
    </location>
    <ligand>
        <name>Mg(2+)</name>
        <dbReference type="ChEBI" id="CHEBI:18420"/>
    </ligand>
</feature>
<feature type="binding site" evidence="1">
    <location>
        <position position="140"/>
    </location>
    <ligand>
        <name>UDP-N-acetyl-alpha-D-glucosamine</name>
        <dbReference type="ChEBI" id="CHEBI:57705"/>
    </ligand>
</feature>
<feature type="binding site" evidence="1">
    <location>
        <position position="154"/>
    </location>
    <ligand>
        <name>UDP-N-acetyl-alpha-D-glucosamine</name>
        <dbReference type="ChEBI" id="CHEBI:57705"/>
    </ligand>
</feature>
<feature type="binding site" evidence="1">
    <location>
        <position position="169"/>
    </location>
    <ligand>
        <name>UDP-N-acetyl-alpha-D-glucosamine</name>
        <dbReference type="ChEBI" id="CHEBI:57705"/>
    </ligand>
</feature>
<feature type="binding site" evidence="1">
    <location>
        <position position="227"/>
    </location>
    <ligand>
        <name>Mg(2+)</name>
        <dbReference type="ChEBI" id="CHEBI:18420"/>
    </ligand>
</feature>
<feature type="binding site" evidence="1">
    <location>
        <position position="227"/>
    </location>
    <ligand>
        <name>UDP-N-acetyl-alpha-D-glucosamine</name>
        <dbReference type="ChEBI" id="CHEBI:57705"/>
    </ligand>
</feature>
<feature type="binding site" evidence="1">
    <location>
        <position position="333"/>
    </location>
    <ligand>
        <name>UDP-N-acetyl-alpha-D-glucosamine</name>
        <dbReference type="ChEBI" id="CHEBI:57705"/>
    </ligand>
</feature>
<feature type="binding site" evidence="1">
    <location>
        <position position="351"/>
    </location>
    <ligand>
        <name>UDP-N-acetyl-alpha-D-glucosamine</name>
        <dbReference type="ChEBI" id="CHEBI:57705"/>
    </ligand>
</feature>
<feature type="binding site" evidence="1">
    <location>
        <position position="366"/>
    </location>
    <ligand>
        <name>UDP-N-acetyl-alpha-D-glucosamine</name>
        <dbReference type="ChEBI" id="CHEBI:57705"/>
    </ligand>
</feature>
<feature type="binding site" evidence="1">
    <location>
        <position position="377"/>
    </location>
    <ligand>
        <name>UDP-N-acetyl-alpha-D-glucosamine</name>
        <dbReference type="ChEBI" id="CHEBI:57705"/>
    </ligand>
</feature>
<feature type="binding site" evidence="1">
    <location>
        <position position="380"/>
    </location>
    <ligand>
        <name>acetyl-CoA</name>
        <dbReference type="ChEBI" id="CHEBI:57288"/>
    </ligand>
</feature>
<feature type="binding site" evidence="1">
    <location>
        <begin position="386"/>
        <end position="387"/>
    </location>
    <ligand>
        <name>acetyl-CoA</name>
        <dbReference type="ChEBI" id="CHEBI:57288"/>
    </ligand>
</feature>
<feature type="binding site" evidence="1">
    <location>
        <position position="405"/>
    </location>
    <ligand>
        <name>acetyl-CoA</name>
        <dbReference type="ChEBI" id="CHEBI:57288"/>
    </ligand>
</feature>
<feature type="binding site" evidence="1">
    <location>
        <position position="423"/>
    </location>
    <ligand>
        <name>acetyl-CoA</name>
        <dbReference type="ChEBI" id="CHEBI:57288"/>
    </ligand>
</feature>
<feature type="binding site" evidence="1">
    <location>
        <position position="440"/>
    </location>
    <ligand>
        <name>acetyl-CoA</name>
        <dbReference type="ChEBI" id="CHEBI:57288"/>
    </ligand>
</feature>
<dbReference type="EC" id="2.7.7.23" evidence="1"/>
<dbReference type="EC" id="2.3.1.157" evidence="1"/>
<dbReference type="EMBL" id="BX950851">
    <property type="protein sequence ID" value="CAG77404.1"/>
    <property type="molecule type" value="Genomic_DNA"/>
</dbReference>
<dbReference type="RefSeq" id="WP_011095964.1">
    <property type="nucleotide sequence ID" value="NC_004547.2"/>
</dbReference>
<dbReference type="SMR" id="Q6CYJ8"/>
<dbReference type="STRING" id="218491.ECA4509"/>
<dbReference type="KEGG" id="eca:ECA4509"/>
<dbReference type="PATRIC" id="fig|218491.5.peg.4596"/>
<dbReference type="eggNOG" id="COG1207">
    <property type="taxonomic scope" value="Bacteria"/>
</dbReference>
<dbReference type="HOGENOM" id="CLU_029499_15_2_6"/>
<dbReference type="OrthoDB" id="9775031at2"/>
<dbReference type="UniPathway" id="UPA00113">
    <property type="reaction ID" value="UER00532"/>
</dbReference>
<dbReference type="UniPathway" id="UPA00113">
    <property type="reaction ID" value="UER00533"/>
</dbReference>
<dbReference type="UniPathway" id="UPA00973"/>
<dbReference type="Proteomes" id="UP000007966">
    <property type="component" value="Chromosome"/>
</dbReference>
<dbReference type="GO" id="GO:0005737">
    <property type="term" value="C:cytoplasm"/>
    <property type="evidence" value="ECO:0007669"/>
    <property type="project" value="UniProtKB-SubCell"/>
</dbReference>
<dbReference type="GO" id="GO:0016020">
    <property type="term" value="C:membrane"/>
    <property type="evidence" value="ECO:0007669"/>
    <property type="project" value="GOC"/>
</dbReference>
<dbReference type="GO" id="GO:0019134">
    <property type="term" value="F:glucosamine-1-phosphate N-acetyltransferase activity"/>
    <property type="evidence" value="ECO:0007669"/>
    <property type="project" value="UniProtKB-UniRule"/>
</dbReference>
<dbReference type="GO" id="GO:0000287">
    <property type="term" value="F:magnesium ion binding"/>
    <property type="evidence" value="ECO:0007669"/>
    <property type="project" value="UniProtKB-UniRule"/>
</dbReference>
<dbReference type="GO" id="GO:0003977">
    <property type="term" value="F:UDP-N-acetylglucosamine diphosphorylase activity"/>
    <property type="evidence" value="ECO:0007669"/>
    <property type="project" value="UniProtKB-UniRule"/>
</dbReference>
<dbReference type="GO" id="GO:0000902">
    <property type="term" value="P:cell morphogenesis"/>
    <property type="evidence" value="ECO:0007669"/>
    <property type="project" value="UniProtKB-UniRule"/>
</dbReference>
<dbReference type="GO" id="GO:0071555">
    <property type="term" value="P:cell wall organization"/>
    <property type="evidence" value="ECO:0007669"/>
    <property type="project" value="UniProtKB-KW"/>
</dbReference>
<dbReference type="GO" id="GO:0009245">
    <property type="term" value="P:lipid A biosynthetic process"/>
    <property type="evidence" value="ECO:0007669"/>
    <property type="project" value="UniProtKB-UniRule"/>
</dbReference>
<dbReference type="GO" id="GO:0009252">
    <property type="term" value="P:peptidoglycan biosynthetic process"/>
    <property type="evidence" value="ECO:0007669"/>
    <property type="project" value="UniProtKB-UniRule"/>
</dbReference>
<dbReference type="GO" id="GO:0008360">
    <property type="term" value="P:regulation of cell shape"/>
    <property type="evidence" value="ECO:0007669"/>
    <property type="project" value="UniProtKB-KW"/>
</dbReference>
<dbReference type="GO" id="GO:0006048">
    <property type="term" value="P:UDP-N-acetylglucosamine biosynthetic process"/>
    <property type="evidence" value="ECO:0007669"/>
    <property type="project" value="UniProtKB-UniPathway"/>
</dbReference>
<dbReference type="CDD" id="cd02540">
    <property type="entry name" value="GT2_GlmU_N_bac"/>
    <property type="match status" value="1"/>
</dbReference>
<dbReference type="CDD" id="cd03353">
    <property type="entry name" value="LbH_GlmU_C"/>
    <property type="match status" value="1"/>
</dbReference>
<dbReference type="FunFam" id="2.160.10.10:FF:000011">
    <property type="entry name" value="Bifunctional protein GlmU"/>
    <property type="match status" value="1"/>
</dbReference>
<dbReference type="FunFam" id="3.90.550.10:FF:000006">
    <property type="entry name" value="Bifunctional protein GlmU"/>
    <property type="match status" value="1"/>
</dbReference>
<dbReference type="Gene3D" id="2.160.10.10">
    <property type="entry name" value="Hexapeptide repeat proteins"/>
    <property type="match status" value="1"/>
</dbReference>
<dbReference type="Gene3D" id="3.90.550.10">
    <property type="entry name" value="Spore Coat Polysaccharide Biosynthesis Protein SpsA, Chain A"/>
    <property type="match status" value="1"/>
</dbReference>
<dbReference type="HAMAP" id="MF_01631">
    <property type="entry name" value="GlmU"/>
    <property type="match status" value="1"/>
</dbReference>
<dbReference type="InterPro" id="IPR005882">
    <property type="entry name" value="Bifunctional_GlmU"/>
</dbReference>
<dbReference type="InterPro" id="IPR050065">
    <property type="entry name" value="GlmU-like"/>
</dbReference>
<dbReference type="InterPro" id="IPR038009">
    <property type="entry name" value="GlmU_C_LbH"/>
</dbReference>
<dbReference type="InterPro" id="IPR001451">
    <property type="entry name" value="Hexapep"/>
</dbReference>
<dbReference type="InterPro" id="IPR018357">
    <property type="entry name" value="Hexapep_transf_CS"/>
</dbReference>
<dbReference type="InterPro" id="IPR025877">
    <property type="entry name" value="MobA-like_NTP_Trfase"/>
</dbReference>
<dbReference type="InterPro" id="IPR029044">
    <property type="entry name" value="Nucleotide-diphossugar_trans"/>
</dbReference>
<dbReference type="InterPro" id="IPR011004">
    <property type="entry name" value="Trimer_LpxA-like_sf"/>
</dbReference>
<dbReference type="NCBIfam" id="TIGR01173">
    <property type="entry name" value="glmU"/>
    <property type="match status" value="1"/>
</dbReference>
<dbReference type="NCBIfam" id="NF006986">
    <property type="entry name" value="PRK09451.1"/>
    <property type="match status" value="1"/>
</dbReference>
<dbReference type="PANTHER" id="PTHR43584:SF3">
    <property type="entry name" value="BIFUNCTIONAL PROTEIN GLMU"/>
    <property type="match status" value="1"/>
</dbReference>
<dbReference type="PANTHER" id="PTHR43584">
    <property type="entry name" value="NUCLEOTIDYL TRANSFERASE"/>
    <property type="match status" value="1"/>
</dbReference>
<dbReference type="Pfam" id="PF00132">
    <property type="entry name" value="Hexapep"/>
    <property type="match status" value="1"/>
</dbReference>
<dbReference type="Pfam" id="PF12804">
    <property type="entry name" value="NTP_transf_3"/>
    <property type="match status" value="1"/>
</dbReference>
<dbReference type="SUPFAM" id="SSF53448">
    <property type="entry name" value="Nucleotide-diphospho-sugar transferases"/>
    <property type="match status" value="1"/>
</dbReference>
<dbReference type="SUPFAM" id="SSF51161">
    <property type="entry name" value="Trimeric LpxA-like enzymes"/>
    <property type="match status" value="1"/>
</dbReference>
<dbReference type="PROSITE" id="PS00101">
    <property type="entry name" value="HEXAPEP_TRANSFERASES"/>
    <property type="match status" value="1"/>
</dbReference>
<proteinExistence type="inferred from homology"/>
<evidence type="ECO:0000255" key="1">
    <source>
        <dbReference type="HAMAP-Rule" id="MF_01631"/>
    </source>
</evidence>
<sequence length="456" mass="48909">MLNSAMSVVILAAGKGTRMYSDLPKVLHKLAGKPMVQHVIDAAMTTGAQHVHLVYGHGGDLLKHELTDPALNWVLQAEQLGTGHAMQQAAPHFADDEDILMLYGDVPLISSQTLVHLREAKPQGGIGLLTVKLDDPAGYGRIVREKGAVVGIVEHKDASEAQRQINEINTGILIANGKDLKRWLSQLNNNNAQGEFYITDIIAMASAEGQRVEAVHPERLSEVEGVNNRLQLSALERIYQREQADKLLLAGVMLLDPARFDLRGELTHGRDVVMDVNVVVEGNVKLGNRVKIGAGCVIKNCIIGDDSEISPYSVLEDSVLEAQCTIGPFARLRPGSELAEGAHVGNFVELKKARLGKGSKAGHLSYLGDADIGSGVNIGAGTITCNYDGANKHKTVIGDDVFVGSDTQLVAPVNVASGATIGAGTTVTRDVAENELVISRVKQRHISGWQRPVKKK</sequence>